<accession>P60529</accession>
<accession>P01952</accession>
<gene>
    <name type="primary">HBA</name>
</gene>
<name>HBA_CANLF</name>
<reference key="1">
    <citation type="journal article" date="1977" name="J. Mol. Evol.">
        <title>The amino acid sequence of dog (Canis familiaris) hemoglobin.</title>
        <authorList>
            <person name="Brimhall B."/>
            <person name="Duerst M."/>
            <person name="Jones R.T."/>
        </authorList>
    </citation>
    <scope>PROTEIN SEQUENCE</scope>
</reference>
<reference key="2">
    <citation type="journal article" date="1976" name="Biochem. Genet.">
        <title>Multiple structural genes for the alpha chain of canine (Canis familiaris) hemoglobin.</title>
        <authorList>
            <person name="Dresler S.L."/>
            <person name="Brimhall B."/>
            <person name="Jones R.T."/>
        </authorList>
    </citation>
    <scope>GENE FAMILY ORGANIZATION</scope>
</reference>
<reference key="3">
    <citation type="journal article" date="2011" name="Acta Crystallogr. D">
        <title>Structure of Greyhound hemoglobin: origin of high oxygen affinity.</title>
        <authorList>
            <person name="Bhatt V.S."/>
            <person name="Zaldivar-Lopez S."/>
            <person name="Harris D.R."/>
            <person name="Couto C.G."/>
            <person name="Wang P.G."/>
            <person name="Palmer A.F."/>
        </authorList>
    </citation>
    <scope>X-RAY CRYSTALLOGRAPHY (1.9 ANGSTROMS)</scope>
    <scope>SUBUNIT</scope>
</reference>
<sequence>VLSPADKTNIKSTWDKIGGHAGDYGGEALDRTFQSFPTTKTYFPHFDLSPGSAQVKAHGKKVADALTTAVAHLDDLPGALSALSDLHAYKLRVDPVNFKLLSHCLLVTLACHHPTEFTPAVHASLDKFFAAVSTVLTSKYR</sequence>
<keyword id="KW-0002">3D-structure</keyword>
<keyword id="KW-0007">Acetylation</keyword>
<keyword id="KW-0903">Direct protein sequencing</keyword>
<keyword id="KW-0349">Heme</keyword>
<keyword id="KW-0408">Iron</keyword>
<keyword id="KW-0479">Metal-binding</keyword>
<keyword id="KW-0561">Oxygen transport</keyword>
<keyword id="KW-0597">Phosphoprotein</keyword>
<keyword id="KW-1185">Reference proteome</keyword>
<keyword id="KW-0813">Transport</keyword>
<evidence type="ECO:0000250" key="1">
    <source>
        <dbReference type="UniProtKB" id="P01942"/>
    </source>
</evidence>
<evidence type="ECO:0000250" key="2">
    <source>
        <dbReference type="UniProtKB" id="P01946"/>
    </source>
</evidence>
<evidence type="ECO:0000250" key="3">
    <source>
        <dbReference type="UniProtKB" id="P69905"/>
    </source>
</evidence>
<evidence type="ECO:0000255" key="4">
    <source>
        <dbReference type="PROSITE-ProRule" id="PRU00238"/>
    </source>
</evidence>
<evidence type="ECO:0000269" key="5">
    <source>
    </source>
</evidence>
<evidence type="ECO:0007829" key="6">
    <source>
        <dbReference type="PDB" id="3GOU"/>
    </source>
</evidence>
<evidence type="ECO:0007829" key="7">
    <source>
        <dbReference type="PDB" id="3PEL"/>
    </source>
</evidence>
<feature type="chain" id="PRO_0000052580" description="Hemoglobin subunit alpha">
    <location>
        <begin position="1"/>
        <end position="141"/>
    </location>
</feature>
<feature type="peptide" id="PRO_0000455847" description="Hemopressin" evidence="2">
    <location>
        <begin position="95"/>
        <end position="103"/>
    </location>
</feature>
<feature type="domain" description="Globin" evidence="4">
    <location>
        <begin position="1"/>
        <end position="141"/>
    </location>
</feature>
<feature type="binding site" evidence="4">
    <location>
        <position position="58"/>
    </location>
    <ligand>
        <name>O2</name>
        <dbReference type="ChEBI" id="CHEBI:15379"/>
    </ligand>
</feature>
<feature type="binding site" description="proximal binding residue" evidence="4">
    <location>
        <position position="87"/>
    </location>
    <ligand>
        <name>heme b</name>
        <dbReference type="ChEBI" id="CHEBI:60344"/>
    </ligand>
    <ligandPart>
        <name>Fe</name>
        <dbReference type="ChEBI" id="CHEBI:18248"/>
    </ligandPart>
</feature>
<feature type="modified residue" description="Phosphoserine" evidence="3">
    <location>
        <position position="3"/>
    </location>
</feature>
<feature type="modified residue" description="N6-succinyllysine" evidence="1">
    <location>
        <position position="7"/>
    </location>
</feature>
<feature type="modified residue" description="Phosphothreonine" evidence="3">
    <location>
        <position position="8"/>
    </location>
</feature>
<feature type="modified residue" description="N6-succinyllysine" evidence="1">
    <location>
        <position position="11"/>
    </location>
</feature>
<feature type="modified residue" description="N6-acetyllysine; alternate" evidence="3">
    <location>
        <position position="16"/>
    </location>
</feature>
<feature type="modified residue" description="N6-succinyllysine; alternate" evidence="1">
    <location>
        <position position="16"/>
    </location>
</feature>
<feature type="modified residue" description="Phosphotyrosine" evidence="3">
    <location>
        <position position="24"/>
    </location>
</feature>
<feature type="modified residue" description="Phosphoserine" evidence="3">
    <location>
        <position position="35"/>
    </location>
</feature>
<feature type="modified residue" description="N6-succinyllysine" evidence="1">
    <location>
        <position position="40"/>
    </location>
</feature>
<feature type="modified residue" description="Phosphoserine" evidence="3">
    <location>
        <position position="49"/>
    </location>
</feature>
<feature type="modified residue" description="Phosphoserine" evidence="1">
    <location>
        <position position="102"/>
    </location>
</feature>
<feature type="modified residue" description="Phosphothreonine" evidence="1">
    <location>
        <position position="108"/>
    </location>
</feature>
<feature type="modified residue" description="Phosphoserine" evidence="1">
    <location>
        <position position="124"/>
    </location>
</feature>
<feature type="modified residue" description="Phosphothreonine" evidence="1">
    <location>
        <position position="134"/>
    </location>
</feature>
<feature type="modified residue" description="Phosphothreonine" evidence="1">
    <location>
        <position position="137"/>
    </location>
</feature>
<feature type="modified residue" description="Phosphoserine" evidence="1">
    <location>
        <position position="138"/>
    </location>
</feature>
<feature type="sequence variant" description="In second chain.">
    <original>A</original>
    <variation>T</variation>
    <location>
        <position position="130"/>
    </location>
</feature>
<feature type="helix" evidence="7">
    <location>
        <begin position="4"/>
        <end position="17"/>
    </location>
</feature>
<feature type="helix" evidence="7">
    <location>
        <begin position="18"/>
        <end position="20"/>
    </location>
</feature>
<feature type="helix" evidence="7">
    <location>
        <begin position="21"/>
        <end position="35"/>
    </location>
</feature>
<feature type="helix" evidence="7">
    <location>
        <begin position="37"/>
        <end position="42"/>
    </location>
</feature>
<feature type="strand" evidence="6">
    <location>
        <begin position="44"/>
        <end position="46"/>
    </location>
</feature>
<feature type="helix" evidence="7">
    <location>
        <begin position="53"/>
        <end position="70"/>
    </location>
</feature>
<feature type="turn" evidence="7">
    <location>
        <begin position="71"/>
        <end position="74"/>
    </location>
</feature>
<feature type="helix" evidence="7">
    <location>
        <begin position="76"/>
        <end position="79"/>
    </location>
</feature>
<feature type="helix" evidence="7">
    <location>
        <begin position="81"/>
        <end position="88"/>
    </location>
</feature>
<feature type="turn" evidence="6">
    <location>
        <begin position="89"/>
        <end position="91"/>
    </location>
</feature>
<feature type="helix" evidence="7">
    <location>
        <begin position="95"/>
        <end position="112"/>
    </location>
</feature>
<feature type="turn" evidence="7">
    <location>
        <begin position="114"/>
        <end position="116"/>
    </location>
</feature>
<feature type="helix" evidence="7">
    <location>
        <begin position="119"/>
        <end position="137"/>
    </location>
</feature>
<protein>
    <recommendedName>
        <fullName>Hemoglobin subunit alpha</fullName>
    </recommendedName>
    <alternativeName>
        <fullName>Alpha-globin</fullName>
    </alternativeName>
    <alternativeName>
        <fullName>Hemoglobin alpha chain</fullName>
    </alternativeName>
    <component>
        <recommendedName>
            <fullName evidence="2">Hemopressin</fullName>
        </recommendedName>
    </component>
</protein>
<organism>
    <name type="scientific">Canis lupus familiaris</name>
    <name type="common">Dog</name>
    <name type="synonym">Canis familiaris</name>
    <dbReference type="NCBI Taxonomy" id="9615"/>
    <lineage>
        <taxon>Eukaryota</taxon>
        <taxon>Metazoa</taxon>
        <taxon>Chordata</taxon>
        <taxon>Craniata</taxon>
        <taxon>Vertebrata</taxon>
        <taxon>Euteleostomi</taxon>
        <taxon>Mammalia</taxon>
        <taxon>Eutheria</taxon>
        <taxon>Laurasiatheria</taxon>
        <taxon>Carnivora</taxon>
        <taxon>Caniformia</taxon>
        <taxon>Canidae</taxon>
        <taxon>Canis</taxon>
    </lineage>
</organism>
<dbReference type="PIR" id="A02274">
    <property type="entry name" value="HADG"/>
</dbReference>
<dbReference type="PIR" id="B92970">
    <property type="entry name" value="HADG2"/>
</dbReference>
<dbReference type="PDB" id="2QLS">
    <property type="method" value="X-ray"/>
    <property type="resolution" value="3.50 A"/>
    <property type="chains" value="A/C=1-141"/>
</dbReference>
<dbReference type="PDB" id="3GOU">
    <property type="method" value="X-ray"/>
    <property type="resolution" value="3.00 A"/>
    <property type="chains" value="A/C=1-141"/>
</dbReference>
<dbReference type="PDB" id="3PEL">
    <property type="method" value="X-ray"/>
    <property type="resolution" value="1.90 A"/>
    <property type="chains" value="A=1-141"/>
</dbReference>
<dbReference type="PDBsum" id="2QLS"/>
<dbReference type="PDBsum" id="3GOU"/>
<dbReference type="PDBsum" id="3PEL"/>
<dbReference type="SMR" id="P60529"/>
<dbReference type="FunCoup" id="P60529">
    <property type="interactions" value="7"/>
</dbReference>
<dbReference type="STRING" id="9615.ENSCAFP00000038026"/>
<dbReference type="PaxDb" id="9612-ENSCAFP00000038026"/>
<dbReference type="eggNOG" id="KOG3378">
    <property type="taxonomic scope" value="Eukaryota"/>
</dbReference>
<dbReference type="InParanoid" id="P60529"/>
<dbReference type="OMA" id="MFTSFPT"/>
<dbReference type="EvolutionaryTrace" id="P60529"/>
<dbReference type="Proteomes" id="UP000002254">
    <property type="component" value="Unplaced"/>
</dbReference>
<dbReference type="Proteomes" id="UP000694429">
    <property type="component" value="Unplaced"/>
</dbReference>
<dbReference type="Proteomes" id="UP000694542">
    <property type="component" value="Unplaced"/>
</dbReference>
<dbReference type="Proteomes" id="UP000805418">
    <property type="component" value="Unplaced"/>
</dbReference>
<dbReference type="GO" id="GO:0031838">
    <property type="term" value="C:haptoglobin-hemoglobin complex"/>
    <property type="evidence" value="ECO:0000318"/>
    <property type="project" value="GO_Central"/>
</dbReference>
<dbReference type="GO" id="GO:0005833">
    <property type="term" value="C:hemoglobin complex"/>
    <property type="evidence" value="ECO:0000318"/>
    <property type="project" value="GO_Central"/>
</dbReference>
<dbReference type="GO" id="GO:0020037">
    <property type="term" value="F:heme binding"/>
    <property type="evidence" value="ECO:0000318"/>
    <property type="project" value="GO_Central"/>
</dbReference>
<dbReference type="GO" id="GO:0005506">
    <property type="term" value="F:iron ion binding"/>
    <property type="evidence" value="ECO:0007669"/>
    <property type="project" value="InterPro"/>
</dbReference>
<dbReference type="GO" id="GO:0019825">
    <property type="term" value="F:oxygen binding"/>
    <property type="evidence" value="ECO:0000318"/>
    <property type="project" value="GO_Central"/>
</dbReference>
<dbReference type="GO" id="GO:0005344">
    <property type="term" value="F:oxygen carrier activity"/>
    <property type="evidence" value="ECO:0000318"/>
    <property type="project" value="GO_Central"/>
</dbReference>
<dbReference type="GO" id="GO:0098869">
    <property type="term" value="P:cellular oxidant detoxification"/>
    <property type="evidence" value="ECO:0007669"/>
    <property type="project" value="GOC"/>
</dbReference>
<dbReference type="GO" id="GO:0042744">
    <property type="term" value="P:hydrogen peroxide catabolic process"/>
    <property type="evidence" value="ECO:0000318"/>
    <property type="project" value="GO_Central"/>
</dbReference>
<dbReference type="CDD" id="cd08927">
    <property type="entry name" value="Hb-alpha-like"/>
    <property type="match status" value="1"/>
</dbReference>
<dbReference type="FunFam" id="1.10.490.10:FF:000002">
    <property type="entry name" value="Hemoglobin subunit alpha"/>
    <property type="match status" value="1"/>
</dbReference>
<dbReference type="Gene3D" id="1.10.490.10">
    <property type="entry name" value="Globins"/>
    <property type="match status" value="1"/>
</dbReference>
<dbReference type="InterPro" id="IPR000971">
    <property type="entry name" value="Globin"/>
</dbReference>
<dbReference type="InterPro" id="IPR009050">
    <property type="entry name" value="Globin-like_sf"/>
</dbReference>
<dbReference type="InterPro" id="IPR012292">
    <property type="entry name" value="Globin/Proto"/>
</dbReference>
<dbReference type="InterPro" id="IPR002338">
    <property type="entry name" value="Hemoglobin_a-typ"/>
</dbReference>
<dbReference type="InterPro" id="IPR050056">
    <property type="entry name" value="Hemoglobin_oxygen_transport"/>
</dbReference>
<dbReference type="InterPro" id="IPR002339">
    <property type="entry name" value="Hemoglobin_pi"/>
</dbReference>
<dbReference type="PANTHER" id="PTHR11442">
    <property type="entry name" value="HEMOGLOBIN FAMILY MEMBER"/>
    <property type="match status" value="1"/>
</dbReference>
<dbReference type="PANTHER" id="PTHR11442:SF48">
    <property type="entry name" value="HEMOGLOBIN SUBUNIT ALPHA"/>
    <property type="match status" value="1"/>
</dbReference>
<dbReference type="Pfam" id="PF00042">
    <property type="entry name" value="Globin"/>
    <property type="match status" value="1"/>
</dbReference>
<dbReference type="PRINTS" id="PR00612">
    <property type="entry name" value="ALPHAHAEM"/>
</dbReference>
<dbReference type="PRINTS" id="PR00815">
    <property type="entry name" value="PIHAEM"/>
</dbReference>
<dbReference type="SUPFAM" id="SSF46458">
    <property type="entry name" value="Globin-like"/>
    <property type="match status" value="1"/>
</dbReference>
<dbReference type="PROSITE" id="PS01033">
    <property type="entry name" value="GLOBIN"/>
    <property type="match status" value="1"/>
</dbReference>
<proteinExistence type="evidence at protein level"/>
<comment type="function">
    <text>Involved in oxygen transport from the lung to the various peripheral tissues.</text>
</comment>
<comment type="function">
    <molecule>Hemopressin</molecule>
    <text evidence="2">Hemopressin acts as an antagonist peptide of the cannabinoid receptor CNR1. Hemopressin-binding efficiently blocks cannabinoid receptor CNR1 and subsequent signaling.</text>
</comment>
<comment type="subunit">
    <text evidence="5">Heterotetramer of two alpha chains and two beta chains.</text>
</comment>
<comment type="tissue specificity">
    <text>Red blood cells.</text>
</comment>
<comment type="miscellaneous">
    <text>The sequence shown is one of two non-allelic alpha chains from dog.</text>
</comment>
<comment type="similarity">
    <text evidence="4">Belongs to the globin family.</text>
</comment>